<dbReference type="EC" id="2.4.2.9" evidence="1"/>
<dbReference type="EMBL" id="CP000868">
    <property type="protein sequence ID" value="ABX14676.1"/>
    <property type="molecule type" value="Genomic_DNA"/>
</dbReference>
<dbReference type="EMBL" id="AP009385">
    <property type="protein sequence ID" value="BAG44174.1"/>
    <property type="molecule type" value="Genomic_DNA"/>
</dbReference>
<dbReference type="RefSeq" id="WP_006413163.1">
    <property type="nucleotide sequence ID" value="NC_010084.1"/>
</dbReference>
<dbReference type="SMR" id="A9AJK1"/>
<dbReference type="STRING" id="395019.BMULJ_02279"/>
<dbReference type="GeneID" id="89570824"/>
<dbReference type="KEGG" id="bmj:BMULJ_02279"/>
<dbReference type="KEGG" id="bmu:Bmul_0985"/>
<dbReference type="eggNOG" id="COG0035">
    <property type="taxonomic scope" value="Bacteria"/>
</dbReference>
<dbReference type="HOGENOM" id="CLU_067096_2_2_4"/>
<dbReference type="UniPathway" id="UPA00574">
    <property type="reaction ID" value="UER00636"/>
</dbReference>
<dbReference type="Proteomes" id="UP000008815">
    <property type="component" value="Chromosome 1"/>
</dbReference>
<dbReference type="GO" id="GO:0005525">
    <property type="term" value="F:GTP binding"/>
    <property type="evidence" value="ECO:0007669"/>
    <property type="project" value="UniProtKB-KW"/>
</dbReference>
<dbReference type="GO" id="GO:0000287">
    <property type="term" value="F:magnesium ion binding"/>
    <property type="evidence" value="ECO:0007669"/>
    <property type="project" value="UniProtKB-UniRule"/>
</dbReference>
<dbReference type="GO" id="GO:0004845">
    <property type="term" value="F:uracil phosphoribosyltransferase activity"/>
    <property type="evidence" value="ECO:0007669"/>
    <property type="project" value="UniProtKB-UniRule"/>
</dbReference>
<dbReference type="GO" id="GO:0044206">
    <property type="term" value="P:UMP salvage"/>
    <property type="evidence" value="ECO:0007669"/>
    <property type="project" value="UniProtKB-UniRule"/>
</dbReference>
<dbReference type="GO" id="GO:0006223">
    <property type="term" value="P:uracil salvage"/>
    <property type="evidence" value="ECO:0007669"/>
    <property type="project" value="InterPro"/>
</dbReference>
<dbReference type="CDD" id="cd06223">
    <property type="entry name" value="PRTases_typeI"/>
    <property type="match status" value="1"/>
</dbReference>
<dbReference type="FunFam" id="3.40.50.2020:FF:000003">
    <property type="entry name" value="Uracil phosphoribosyltransferase"/>
    <property type="match status" value="1"/>
</dbReference>
<dbReference type="Gene3D" id="3.40.50.2020">
    <property type="match status" value="1"/>
</dbReference>
<dbReference type="HAMAP" id="MF_01218_B">
    <property type="entry name" value="Upp_B"/>
    <property type="match status" value="1"/>
</dbReference>
<dbReference type="InterPro" id="IPR000836">
    <property type="entry name" value="PRibTrfase_dom"/>
</dbReference>
<dbReference type="InterPro" id="IPR029057">
    <property type="entry name" value="PRTase-like"/>
</dbReference>
<dbReference type="InterPro" id="IPR034332">
    <property type="entry name" value="Upp_B"/>
</dbReference>
<dbReference type="InterPro" id="IPR050054">
    <property type="entry name" value="UPRTase/APRTase"/>
</dbReference>
<dbReference type="InterPro" id="IPR005765">
    <property type="entry name" value="Ura_phspho_trans"/>
</dbReference>
<dbReference type="NCBIfam" id="NF001097">
    <property type="entry name" value="PRK00129.1"/>
    <property type="match status" value="1"/>
</dbReference>
<dbReference type="NCBIfam" id="TIGR01091">
    <property type="entry name" value="upp"/>
    <property type="match status" value="1"/>
</dbReference>
<dbReference type="PANTHER" id="PTHR32315">
    <property type="entry name" value="ADENINE PHOSPHORIBOSYLTRANSFERASE"/>
    <property type="match status" value="1"/>
</dbReference>
<dbReference type="PANTHER" id="PTHR32315:SF4">
    <property type="entry name" value="URACIL PHOSPHORIBOSYLTRANSFERASE, CHLOROPLASTIC"/>
    <property type="match status" value="1"/>
</dbReference>
<dbReference type="Pfam" id="PF14681">
    <property type="entry name" value="UPRTase"/>
    <property type="match status" value="1"/>
</dbReference>
<dbReference type="SUPFAM" id="SSF53271">
    <property type="entry name" value="PRTase-like"/>
    <property type="match status" value="1"/>
</dbReference>
<keyword id="KW-0021">Allosteric enzyme</keyword>
<keyword id="KW-0328">Glycosyltransferase</keyword>
<keyword id="KW-0342">GTP-binding</keyword>
<keyword id="KW-0460">Magnesium</keyword>
<keyword id="KW-0547">Nucleotide-binding</keyword>
<keyword id="KW-1185">Reference proteome</keyword>
<keyword id="KW-0808">Transferase</keyword>
<name>UPP_BURM1</name>
<accession>A9AJK1</accession>
<proteinExistence type="inferred from homology"/>
<gene>
    <name evidence="1" type="primary">upp</name>
    <name type="ordered locus">Bmul_0985</name>
    <name type="ordered locus">BMULJ_02279</name>
</gene>
<reference key="1">
    <citation type="submission" date="2007-10" db="EMBL/GenBank/DDBJ databases">
        <title>Complete sequence of chromosome 1 of Burkholderia multivorans ATCC 17616.</title>
        <authorList>
            <person name="Copeland A."/>
            <person name="Lucas S."/>
            <person name="Lapidus A."/>
            <person name="Barry K."/>
            <person name="Glavina del Rio T."/>
            <person name="Dalin E."/>
            <person name="Tice H."/>
            <person name="Pitluck S."/>
            <person name="Chain P."/>
            <person name="Malfatti S."/>
            <person name="Shin M."/>
            <person name="Vergez L."/>
            <person name="Schmutz J."/>
            <person name="Larimer F."/>
            <person name="Land M."/>
            <person name="Hauser L."/>
            <person name="Kyrpides N."/>
            <person name="Kim E."/>
            <person name="Tiedje J."/>
            <person name="Richardson P."/>
        </authorList>
    </citation>
    <scope>NUCLEOTIDE SEQUENCE [LARGE SCALE GENOMIC DNA]</scope>
    <source>
        <strain>ATCC 17616 / 249</strain>
    </source>
</reference>
<reference key="2">
    <citation type="submission" date="2007-04" db="EMBL/GenBank/DDBJ databases">
        <title>Complete genome sequence of Burkholderia multivorans ATCC 17616.</title>
        <authorList>
            <person name="Ohtsubo Y."/>
            <person name="Yamashita A."/>
            <person name="Kurokawa K."/>
            <person name="Takami H."/>
            <person name="Yuhara S."/>
            <person name="Nishiyama E."/>
            <person name="Endo R."/>
            <person name="Miyazaki R."/>
            <person name="Ono A."/>
            <person name="Yano K."/>
            <person name="Ito M."/>
            <person name="Sota M."/>
            <person name="Yuji N."/>
            <person name="Hattori M."/>
            <person name="Tsuda M."/>
        </authorList>
    </citation>
    <scope>NUCLEOTIDE SEQUENCE [LARGE SCALE GENOMIC DNA]</scope>
    <source>
        <strain>ATCC 17616 / 249</strain>
    </source>
</reference>
<sequence length="216" mass="24029">MKQDSRFPNLFILDHPLIQHKLTHMRDKDTSTRTFRELLREITLLMGYEITRNLPITTKRVETPLVEIDAPVIAGKKLAIVPVLRAGVGMSDGLLDLIPSARVGHIGVYRADDHRPVEYLVRLPDLEDRIFILCDPMVATGYSAVHAVDVLKRRNVPAANIMFVALVAAPEGVQVFQDAHPDVKLFVASLDSHLNEHAYIVPGLGDAGDRLFGTKN</sequence>
<feature type="chain" id="PRO_1000139104" description="Uracil phosphoribosyltransferase">
    <location>
        <begin position="1"/>
        <end position="216"/>
    </location>
</feature>
<feature type="binding site" evidence="1">
    <location>
        <position position="85"/>
    </location>
    <ligand>
        <name>5-phospho-alpha-D-ribose 1-diphosphate</name>
        <dbReference type="ChEBI" id="CHEBI:58017"/>
    </ligand>
</feature>
<feature type="binding site" evidence="1">
    <location>
        <position position="110"/>
    </location>
    <ligand>
        <name>5-phospho-alpha-D-ribose 1-diphosphate</name>
        <dbReference type="ChEBI" id="CHEBI:58017"/>
    </ligand>
</feature>
<feature type="binding site" evidence="1">
    <location>
        <begin position="135"/>
        <end position="143"/>
    </location>
    <ligand>
        <name>5-phospho-alpha-D-ribose 1-diphosphate</name>
        <dbReference type="ChEBI" id="CHEBI:58017"/>
    </ligand>
</feature>
<feature type="binding site" evidence="1">
    <location>
        <position position="200"/>
    </location>
    <ligand>
        <name>uracil</name>
        <dbReference type="ChEBI" id="CHEBI:17568"/>
    </ligand>
</feature>
<feature type="binding site" evidence="1">
    <location>
        <begin position="205"/>
        <end position="207"/>
    </location>
    <ligand>
        <name>uracil</name>
        <dbReference type="ChEBI" id="CHEBI:17568"/>
    </ligand>
</feature>
<feature type="binding site" evidence="1">
    <location>
        <position position="206"/>
    </location>
    <ligand>
        <name>5-phospho-alpha-D-ribose 1-diphosphate</name>
        <dbReference type="ChEBI" id="CHEBI:58017"/>
    </ligand>
</feature>
<evidence type="ECO:0000255" key="1">
    <source>
        <dbReference type="HAMAP-Rule" id="MF_01218"/>
    </source>
</evidence>
<comment type="function">
    <text evidence="1">Catalyzes the conversion of uracil and 5-phospho-alpha-D-ribose 1-diphosphate (PRPP) to UMP and diphosphate.</text>
</comment>
<comment type="catalytic activity">
    <reaction evidence="1">
        <text>UMP + diphosphate = 5-phospho-alpha-D-ribose 1-diphosphate + uracil</text>
        <dbReference type="Rhea" id="RHEA:13017"/>
        <dbReference type="ChEBI" id="CHEBI:17568"/>
        <dbReference type="ChEBI" id="CHEBI:33019"/>
        <dbReference type="ChEBI" id="CHEBI:57865"/>
        <dbReference type="ChEBI" id="CHEBI:58017"/>
        <dbReference type="EC" id="2.4.2.9"/>
    </reaction>
</comment>
<comment type="cofactor">
    <cofactor evidence="1">
        <name>Mg(2+)</name>
        <dbReference type="ChEBI" id="CHEBI:18420"/>
    </cofactor>
    <text evidence="1">Binds 1 Mg(2+) ion per subunit. The magnesium is bound as Mg-PRPP.</text>
</comment>
<comment type="activity regulation">
    <text evidence="1">Allosterically activated by GTP.</text>
</comment>
<comment type="pathway">
    <text evidence="1">Pyrimidine metabolism; UMP biosynthesis via salvage pathway; UMP from uracil: step 1/1.</text>
</comment>
<comment type="similarity">
    <text evidence="1">Belongs to the UPRTase family.</text>
</comment>
<protein>
    <recommendedName>
        <fullName evidence="1">Uracil phosphoribosyltransferase</fullName>
        <ecNumber evidence="1">2.4.2.9</ecNumber>
    </recommendedName>
    <alternativeName>
        <fullName evidence="1">UMP pyrophosphorylase</fullName>
    </alternativeName>
    <alternativeName>
        <fullName evidence="1">UPRTase</fullName>
    </alternativeName>
</protein>
<organism>
    <name type="scientific">Burkholderia multivorans (strain ATCC 17616 / 249)</name>
    <dbReference type="NCBI Taxonomy" id="395019"/>
    <lineage>
        <taxon>Bacteria</taxon>
        <taxon>Pseudomonadati</taxon>
        <taxon>Pseudomonadota</taxon>
        <taxon>Betaproteobacteria</taxon>
        <taxon>Burkholderiales</taxon>
        <taxon>Burkholderiaceae</taxon>
        <taxon>Burkholderia</taxon>
        <taxon>Burkholderia cepacia complex</taxon>
    </lineage>
</organism>